<organism>
    <name type="scientific">Oxyuranus microlepidotus</name>
    <name type="common">Inland taipan</name>
    <name type="synonym">Diemenia microlepidota</name>
    <dbReference type="NCBI Taxonomy" id="111177"/>
    <lineage>
        <taxon>Eukaryota</taxon>
        <taxon>Metazoa</taxon>
        <taxon>Chordata</taxon>
        <taxon>Craniata</taxon>
        <taxon>Vertebrata</taxon>
        <taxon>Euteleostomi</taxon>
        <taxon>Lepidosauria</taxon>
        <taxon>Squamata</taxon>
        <taxon>Bifurcata</taxon>
        <taxon>Unidentata</taxon>
        <taxon>Episquamata</taxon>
        <taxon>Toxicofera</taxon>
        <taxon>Serpentes</taxon>
        <taxon>Colubroidea</taxon>
        <taxon>Elapidae</taxon>
        <taxon>Hydrophiinae</taxon>
        <taxon>Oxyuranus</taxon>
    </lineage>
</organism>
<evidence type="ECO:0000250" key="1">
    <source>
        <dbReference type="UniProtKB" id="C6EVG7"/>
    </source>
</evidence>
<evidence type="ECO:0000250" key="2">
    <source>
        <dbReference type="UniProtKB" id="P83231"/>
    </source>
</evidence>
<evidence type="ECO:0000269" key="3">
    <source>
    </source>
</evidence>
<evidence type="ECO:0000303" key="4">
    <source>
    </source>
</evidence>
<evidence type="ECO:0000303" key="5">
    <source>
    </source>
</evidence>
<evidence type="ECO:0000305" key="6"/>
<evidence type="ECO:0000305" key="7">
    <source>
    </source>
</evidence>
<sequence length="40" mass="4115">SDPKIGNGCFGFPIDRIGSVSGLGCNRLVQNPPKPISGES</sequence>
<comment type="function">
    <text evidence="1 3">Snake venom natriuretic peptide that exhibits vasoactive and hypotensive activity (By similarity). Stimulates cGMP production through the natriuretic peptide receptor 1 (NPR1) with very high potencies for the rat NPR1 (EC(50)=18 nM), and very weak potencies over human NPR1 (30% activation at 10 uM) (PubMed:37049825).</text>
</comment>
<comment type="subcellular location">
    <subcellularLocation>
        <location evidence="7">Secreted</location>
    </subcellularLocation>
</comment>
<comment type="tissue specificity">
    <text evidence="7">Expressed by the venom gland.</text>
</comment>
<comment type="similarity">
    <text evidence="6">Belongs to the natriuretic peptide family.</text>
</comment>
<accession>Q3SAF8</accession>
<proteinExistence type="inferred from homology"/>
<reference key="1">
    <citation type="journal article" date="2006" name="Biochimie">
        <title>Cloning and characterisation of natriuretic peptides from the venom glands of Australian elapids.</title>
        <authorList>
            <person name="St Pierre L."/>
            <person name="Flight S."/>
            <person name="Masci P.P."/>
            <person name="Hanchard K.J."/>
            <person name="Lewis R.J."/>
            <person name="Alewood P.F."/>
            <person name="de Jersey J."/>
            <person name="Lavin M.F."/>
        </authorList>
    </citation>
    <scope>NUCLEOTIDE SEQUENCE [MRNA]</scope>
    <source>
        <tissue>Venom gland</tissue>
    </source>
</reference>
<reference key="2">
    <citation type="journal article" date="2023" name="Molecules">
        <title>Taipan natriuretic peptides are potent and selective agonists for the natriuretic peptide receptor A.</title>
        <authorList>
            <person name="Vink S."/>
            <person name="Akondi K.B."/>
            <person name="Jin J."/>
            <person name="Poth K."/>
            <person name="Torres A.M."/>
            <person name="Kuchel P.W."/>
            <person name="Burke S.L."/>
            <person name="Head G.A."/>
            <person name="Alewood P.F."/>
        </authorList>
    </citation>
    <scope>FUNCTION</scope>
    <scope>SYNTHESIS</scope>
    <scope>BIOASSAY</scope>
</reference>
<protein>
    <recommendedName>
        <fullName evidence="5">Natriuretic peptide TNPd</fullName>
    </recommendedName>
    <alternativeName>
        <fullName evidence="4">OmNP-d</fullName>
    </alternativeName>
</protein>
<feature type="peptide" id="PRO_5000140400" description="Natriuretic peptide TNPd" evidence="2">
    <location>
        <begin position="1"/>
        <end position="40"/>
    </location>
</feature>
<feature type="disulfide bond" evidence="2">
    <location>
        <begin position="9"/>
        <end position="25"/>
    </location>
</feature>
<dbReference type="EMBL" id="DQ116722">
    <property type="protein sequence ID" value="AAZ82817.1"/>
    <property type="molecule type" value="mRNA"/>
</dbReference>
<dbReference type="GO" id="GO:0005576">
    <property type="term" value="C:extracellular region"/>
    <property type="evidence" value="ECO:0007669"/>
    <property type="project" value="UniProtKB-SubCell"/>
</dbReference>
<dbReference type="GO" id="GO:0005179">
    <property type="term" value="F:hormone activity"/>
    <property type="evidence" value="ECO:0007669"/>
    <property type="project" value="InterPro"/>
</dbReference>
<dbReference type="GO" id="GO:0090729">
    <property type="term" value="F:toxin activity"/>
    <property type="evidence" value="ECO:0007669"/>
    <property type="project" value="UniProtKB-KW"/>
</dbReference>
<dbReference type="GO" id="GO:0008217">
    <property type="term" value="P:regulation of blood pressure"/>
    <property type="evidence" value="ECO:0007669"/>
    <property type="project" value="UniProtKB-KW"/>
</dbReference>
<dbReference type="GO" id="GO:0042311">
    <property type="term" value="P:vasodilation"/>
    <property type="evidence" value="ECO:0007669"/>
    <property type="project" value="UniProtKB-KW"/>
</dbReference>
<dbReference type="InterPro" id="IPR000663">
    <property type="entry name" value="Natr_peptide"/>
</dbReference>
<dbReference type="InterPro" id="IPR030480">
    <property type="entry name" value="Natr_peptide_CS"/>
</dbReference>
<dbReference type="InterPro" id="IPR002408">
    <property type="entry name" value="Natriuretic_peptide_brain"/>
</dbReference>
<dbReference type="Pfam" id="PF00212">
    <property type="entry name" value="ANP"/>
    <property type="match status" value="1"/>
</dbReference>
<dbReference type="PRINTS" id="PR00712">
    <property type="entry name" value="BNATPEPTIDE"/>
</dbReference>
<dbReference type="SMART" id="SM00183">
    <property type="entry name" value="NAT_PEP"/>
    <property type="match status" value="1"/>
</dbReference>
<dbReference type="PROSITE" id="PS00263">
    <property type="entry name" value="NATRIURETIC_PEPTIDE"/>
    <property type="match status" value="1"/>
</dbReference>
<name>VNPD_OXYMI</name>
<keyword id="KW-1015">Disulfide bond</keyword>
<keyword id="KW-0382">Hypotensive agent</keyword>
<keyword id="KW-0964">Secreted</keyword>
<keyword id="KW-0800">Toxin</keyword>
<keyword id="KW-0838">Vasoactive</keyword>
<keyword id="KW-0840">Vasodilator</keyword>